<comment type="catalytic activity">
    <reaction evidence="2">
        <text>Endohydrolysis of (1-&gt;6)-alpha-D-glucosidic linkages in dextran.</text>
        <dbReference type="EC" id="3.2.1.11"/>
    </reaction>
</comment>
<comment type="biophysicochemical properties">
    <kinetics>
        <text evidence="2">Because of the indeterminate molecular weight of dextran, an approximate KM value of 0.3738 mg/ml was determined.</text>
    </kinetics>
    <phDependence>
        <text evidence="2">Optimum pH is 4.5.</text>
    </phDependence>
    <temperatureDependence>
        <text evidence="2">Optimum temperature is 35 degrees Celsius.</text>
    </temperatureDependence>
</comment>
<comment type="miscellaneous">
    <text evidence="2">On the 2D-gel the determined pI of this protein is: 4.5, its MW is: 158 kDa.</text>
</comment>
<organism>
    <name type="scientific">Bacillus licheniformis</name>
    <dbReference type="NCBI Taxonomy" id="1402"/>
    <lineage>
        <taxon>Bacteria</taxon>
        <taxon>Bacillati</taxon>
        <taxon>Bacillota</taxon>
        <taxon>Bacilli</taxon>
        <taxon>Bacillales</taxon>
        <taxon>Bacillaceae</taxon>
        <taxon>Bacillus</taxon>
    </lineage>
</organism>
<evidence type="ECO:0000250" key="1">
    <source>
        <dbReference type="UniProtKB" id="P39653"/>
    </source>
</evidence>
<evidence type="ECO:0000269" key="2">
    <source ref="1"/>
</evidence>
<evidence type="ECO:0000303" key="3">
    <source ref="1"/>
</evidence>
<evidence type="ECO:0000305" key="4"/>
<keyword id="KW-0119">Carbohydrate metabolism</keyword>
<keyword id="KW-0903">Direct protein sequencing</keyword>
<keyword id="KW-0326">Glycosidase</keyword>
<keyword id="KW-0378">Hydrolase</keyword>
<keyword id="KW-0624">Polysaccharide degradation</keyword>
<accession>C0HJE3</accession>
<reference evidence="4" key="1">
    <citation type="submission" date="2013-08" db="UniProtKB">
        <title>Dextranase: isolation, purification and characterization of dextran degrading enzyme from Bacillus licheniformis KIBGE-IB25.</title>
        <authorList>
            <person name="Zohra R.R."/>
            <person name="Sattar H."/>
            <person name="Karim A."/>
            <person name="Aman A."/>
            <person name="Qader S.A."/>
        </authorList>
    </citation>
    <scope>PROTEIN SEQUENCE</scope>
    <scope>CATALYTIC ACTIVITY</scope>
    <scope>BIOPHYSICOCHEMICAL PROPERTIES</scope>
    <source>
        <strain evidence="2">KIBGE-IB25</strain>
    </source>
</reference>
<dbReference type="EC" id="3.2.1.11" evidence="2"/>
<dbReference type="BRENDA" id="3.2.1.11">
    <property type="organism ID" value="669"/>
</dbReference>
<dbReference type="GO" id="GO:0033904">
    <property type="term" value="F:dextranase activity"/>
    <property type="evidence" value="ECO:0007669"/>
    <property type="project" value="UniProtKB-EC"/>
</dbReference>
<dbReference type="GO" id="GO:0000272">
    <property type="term" value="P:polysaccharide catabolic process"/>
    <property type="evidence" value="ECO:0007669"/>
    <property type="project" value="UniProtKB-KW"/>
</dbReference>
<name>DEXT_BACLI</name>
<protein>
    <recommendedName>
        <fullName evidence="3">Dextranase</fullName>
        <ecNumber evidence="2">3.2.1.11</ecNumber>
    </recommendedName>
    <alternativeName>
        <fullName evidence="1">Alpha-1,6-glucan-6-glucanohydrolase</fullName>
    </alternativeName>
</protein>
<sequence length="10" mass="1128">AYTVTLYLQG</sequence>
<feature type="chain" id="PRO_0000424175" description="Dextranase">
    <location>
        <begin position="1"/>
        <end position="10" status="greater than"/>
    </location>
</feature>
<feature type="non-terminal residue" evidence="3">
    <location>
        <position position="10"/>
    </location>
</feature>
<proteinExistence type="evidence at protein level"/>